<proteinExistence type="inferred from homology"/>
<protein>
    <recommendedName>
        <fullName>Envelope glycoprotein D</fullName>
        <shortName>gD</shortName>
    </recommendedName>
</protein>
<dbReference type="EMBL" id="K02372">
    <property type="protein sequence ID" value="AAA45786.1"/>
    <property type="molecule type" value="Genomic_DNA"/>
</dbReference>
<dbReference type="BMRB" id="P06476"/>
<dbReference type="SMR" id="P06476"/>
<dbReference type="GlyCosmos" id="P06476">
    <property type="glycosylation" value="3 sites, No reported glycans"/>
</dbReference>
<dbReference type="GO" id="GO:0044177">
    <property type="term" value="C:host cell Golgi apparatus"/>
    <property type="evidence" value="ECO:0007669"/>
    <property type="project" value="UniProtKB-SubCell"/>
</dbReference>
<dbReference type="GO" id="GO:0016020">
    <property type="term" value="C:membrane"/>
    <property type="evidence" value="ECO:0007669"/>
    <property type="project" value="UniProtKB-KW"/>
</dbReference>
<dbReference type="GO" id="GO:0019031">
    <property type="term" value="C:viral envelope"/>
    <property type="evidence" value="ECO:0007669"/>
    <property type="project" value="UniProtKB-KW"/>
</dbReference>
<dbReference type="GO" id="GO:0055036">
    <property type="term" value="C:virion membrane"/>
    <property type="evidence" value="ECO:0007669"/>
    <property type="project" value="UniProtKB-SubCell"/>
</dbReference>
<dbReference type="GO" id="GO:0046872">
    <property type="term" value="F:metal ion binding"/>
    <property type="evidence" value="ECO:0007669"/>
    <property type="project" value="UniProtKB-KW"/>
</dbReference>
<dbReference type="GO" id="GO:0098670">
    <property type="term" value="P:entry receptor-mediated virion attachment to host cell"/>
    <property type="evidence" value="ECO:0007669"/>
    <property type="project" value="UniProtKB-KW"/>
</dbReference>
<dbReference type="GO" id="GO:0046718">
    <property type="term" value="P:symbiont entry into host cell"/>
    <property type="evidence" value="ECO:0007669"/>
    <property type="project" value="UniProtKB-KW"/>
</dbReference>
<dbReference type="CDD" id="cd12087">
    <property type="entry name" value="TM_EGFR-like"/>
    <property type="match status" value="1"/>
</dbReference>
<dbReference type="FunFam" id="2.70.230.10:FF:000001">
    <property type="entry name" value="Envelope glycoprotein D"/>
    <property type="match status" value="1"/>
</dbReference>
<dbReference type="Gene3D" id="2.70.230.10">
    <property type="match status" value="1"/>
</dbReference>
<dbReference type="InterPro" id="IPR002896">
    <property type="entry name" value="Herpes_glycop_dom"/>
</dbReference>
<dbReference type="InterPro" id="IPR036179">
    <property type="entry name" value="Ig-like_dom_sf"/>
</dbReference>
<dbReference type="Pfam" id="PF01537">
    <property type="entry name" value="Herpes_glycop_D"/>
    <property type="match status" value="1"/>
</dbReference>
<dbReference type="SUPFAM" id="SSF48726">
    <property type="entry name" value="Immunoglobulin"/>
    <property type="match status" value="1"/>
</dbReference>
<gene>
    <name type="primary">gD</name>
    <name type="synonym">US6</name>
</gene>
<feature type="signal peptide" evidence="4">
    <location>
        <begin position="1"/>
        <end position="25"/>
    </location>
</feature>
<feature type="chain" id="PRO_0000038216" description="Envelope glycoprotein D">
    <location>
        <begin position="26"/>
        <end position="393"/>
    </location>
</feature>
<feature type="topological domain" description="Virion surface" evidence="4">
    <location>
        <begin position="26"/>
        <end position="338"/>
    </location>
</feature>
<feature type="transmembrane region" description="Helical" evidence="4">
    <location>
        <begin position="339"/>
        <end position="363"/>
    </location>
</feature>
<feature type="topological domain" description="Intravirion" evidence="4">
    <location>
        <begin position="364"/>
        <end position="393"/>
    </location>
</feature>
<feature type="region of interest" description="Interaction with TNFRSF14" evidence="1">
    <location>
        <begin position="25"/>
        <end position="57"/>
    </location>
</feature>
<feature type="region of interest" description="Profusion" evidence="2">
    <location>
        <begin position="260"/>
        <end position="304"/>
    </location>
</feature>
<feature type="region of interest" description="Disordered" evidence="5">
    <location>
        <begin position="273"/>
        <end position="300"/>
    </location>
</feature>
<feature type="binding site" evidence="1">
    <location>
        <position position="64"/>
    </location>
    <ligand>
        <name>Zn(2+)</name>
        <dbReference type="ChEBI" id="CHEBI:29105"/>
        <note>ligand shared between dimeric partners</note>
    </ligand>
</feature>
<feature type="binding site" evidence="1">
    <location>
        <position position="239"/>
    </location>
    <ligand>
        <name>Zn(2+)</name>
        <dbReference type="ChEBI" id="CHEBI:29105"/>
        <note>ligand shared between dimeric partners</note>
    </ligand>
</feature>
<feature type="glycosylation site" description="N-linked (GlcNAc...) asparagine; by host" evidence="4">
    <location>
        <position position="118"/>
    </location>
</feature>
<feature type="glycosylation site" description="N-linked (GlcNAc...) asparagine; by host" evidence="4">
    <location>
        <position position="145"/>
    </location>
</feature>
<feature type="glycosylation site" description="N-linked (GlcNAc...) asparagine; by host" evidence="4">
    <location>
        <position position="286"/>
    </location>
</feature>
<feature type="disulfide bond" evidence="1">
    <location>
        <begin position="90"/>
        <end position="213"/>
    </location>
</feature>
<feature type="disulfide bond" evidence="1">
    <location>
        <begin position="130"/>
        <end position="226"/>
    </location>
</feature>
<feature type="disulfide bond" evidence="1">
    <location>
        <begin position="142"/>
        <end position="151"/>
    </location>
</feature>
<organismHost>
    <name type="scientific">Homo sapiens</name>
    <name type="common">Human</name>
    <dbReference type="NCBI Taxonomy" id="9606"/>
</organismHost>
<comment type="function">
    <text evidence="2">Envelope glycoprotein that binds to the host cell entry receptors NECTIN1, TNFRSF14/HVEM and 3-O-sulfated heparan sulfate, promoting the virus entry into host cells. May trigger fusion with host membrane, by recruiting the fusion machinery composed of gB and gH/gL (By similarity).</text>
</comment>
<comment type="subunit">
    <text evidence="2 3">Homodimer (By similarity). Interacts with host receptor TNFRSF14. Interacts with host receptor NECTIN1. Interacts (via profusion domain) with gB; this interaction occurs in the absence of gH/gL. Interacts (via profusion domain) with gH/gL heterodimer; this interaction occurs in the absence of gB. Associates with the gB-gH/gL-gD complex. Interacts (via C-terminus) with UL11 tegument protein (By similarity). Interacts with host RSAD2 (By similarity).</text>
</comment>
<comment type="subcellular location">
    <subcellularLocation>
        <location evidence="2">Virion membrane</location>
        <topology evidence="2">Single-pass type I membrane protein</topology>
    </subcellularLocation>
    <subcellularLocation>
        <location evidence="3">Host Golgi apparatus</location>
    </subcellularLocation>
    <text evidence="3">During virion morphogenesis, this protein probably accumulates in the endosomes and trans-Golgi where secondary envelopment occurs.</text>
</comment>
<comment type="similarity">
    <text evidence="6">Belongs to the herpesviridae glycoprotein D family.</text>
</comment>
<evidence type="ECO:0000250" key="1">
    <source>
        <dbReference type="UniProtKB" id="P57083"/>
    </source>
</evidence>
<evidence type="ECO:0000250" key="2">
    <source>
        <dbReference type="UniProtKB" id="Q05059"/>
    </source>
</evidence>
<evidence type="ECO:0000250" key="3">
    <source>
        <dbReference type="UniProtKB" id="Q69091"/>
    </source>
</evidence>
<evidence type="ECO:0000255" key="4"/>
<evidence type="ECO:0000256" key="5">
    <source>
        <dbReference type="SAM" id="MobiDB-lite"/>
    </source>
</evidence>
<evidence type="ECO:0000305" key="6"/>
<reference key="1">
    <citation type="journal article" date="1984" name="DNA">
        <title>DNA sequence analysis of the type-common glycoprotein-D genes of herpes simplex virus types 1 and 2.</title>
        <authorList>
            <person name="Lasky L.A."/>
            <person name="Dowbenko D.J."/>
        </authorList>
    </citation>
    <scope>NUCLEOTIDE SEQUENCE [GENOMIC DNA]</scope>
</reference>
<accession>P06476</accession>
<keyword id="KW-1015">Disulfide bond</keyword>
<keyword id="KW-0325">Glycoprotein</keyword>
<keyword id="KW-1040">Host Golgi apparatus</keyword>
<keyword id="KW-0945">Host-virus interaction</keyword>
<keyword id="KW-0472">Membrane</keyword>
<keyword id="KW-0479">Metal-binding</keyword>
<keyword id="KW-0732">Signal</keyword>
<keyword id="KW-0812">Transmembrane</keyword>
<keyword id="KW-1133">Transmembrane helix</keyword>
<keyword id="KW-1161">Viral attachment to host cell</keyword>
<keyword id="KW-1234">Viral attachment to host entry receptor</keyword>
<keyword id="KW-0261">Viral envelope protein</keyword>
<keyword id="KW-0946">Virion</keyword>
<keyword id="KW-1160">Virus entry into host cell</keyword>
<keyword id="KW-0862">Zinc</keyword>
<organism>
    <name type="scientific">Human herpesvirus 1 (strain HZT)</name>
    <name type="common">HHV-1</name>
    <name type="synonym">Human herpes simplex virus 1</name>
    <dbReference type="NCBI Taxonomy" id="10305"/>
    <lineage>
        <taxon>Viruses</taxon>
        <taxon>Duplodnaviria</taxon>
        <taxon>Heunggongvirae</taxon>
        <taxon>Peploviricota</taxon>
        <taxon>Herviviricetes</taxon>
        <taxon>Herpesvirales</taxon>
        <taxon>Orthoherpesviridae</taxon>
        <taxon>Alphaherpesvirinae</taxon>
        <taxon>Simplexvirus</taxon>
        <taxon>Simplexvirus humanalpha1</taxon>
        <taxon>Human herpesvirus 1</taxon>
    </lineage>
</organism>
<name>GD_HHV1H</name>
<sequence length="393" mass="43368">MGGAAARLGAVILFVVIVGLHGVRGKYALADASLKMADPNRFRGKDLPVLDQLTDPPGVRRVYHIQAGLPNPFQPPSLPITVYRRVERACRSVLLNAPSEAPQIVRGASEDVRKQPYNLTIAWFRMGGNCAIPITVMEYTECSYNKSLGACPIRTQPRWNYYDSFSAVSEDNLGFLMHAPAFETAGTYLRLVKINDWTEITQFILEHRAKGSCKYTLPLRIPPSACLSPQAYQQGVTVDSIGMLPRFIPENQRTVAVYSLKIAGWHGPRAPYTSTLLPPELPETPNATQPELAPEDPEDSALLEDPVGTVAPQIPPNWHIPSIQDAATPYHPPATPNNMGLIAGAVGGSLLAALVICGIVYWMRRRTRKAPKRIRLPHIREDDQPSSHQPLFY</sequence>